<sequence length="34" mass="3775">MSDINAARLPSFFFPVPCISDDIEMVLTRGESLC</sequence>
<accession>P0CU61</accession>
<dbReference type="GO" id="GO:0090729">
    <property type="term" value="F:toxin activity"/>
    <property type="evidence" value="ECO:0007669"/>
    <property type="project" value="UniProtKB-KW"/>
</dbReference>
<dbReference type="InterPro" id="IPR027582">
    <property type="entry name" value="Amanitin/phalloidin"/>
</dbReference>
<dbReference type="NCBIfam" id="TIGR04309">
    <property type="entry name" value="amanitin"/>
    <property type="match status" value="1"/>
</dbReference>
<organism>
    <name type="scientific">Amanita phalloides</name>
    <name type="common">Death cap</name>
    <dbReference type="NCBI Taxonomy" id="67723"/>
    <lineage>
        <taxon>Eukaryota</taxon>
        <taxon>Fungi</taxon>
        <taxon>Dikarya</taxon>
        <taxon>Basidiomycota</taxon>
        <taxon>Agaricomycotina</taxon>
        <taxon>Agaricomycetes</taxon>
        <taxon>Agaricomycetidae</taxon>
        <taxon>Agaricales</taxon>
        <taxon>Pluteineae</taxon>
        <taxon>Amanitaceae</taxon>
        <taxon>Amanita</taxon>
    </lineage>
</organism>
<reference key="1">
    <citation type="journal article" date="2016" name="BMC Genomics">
        <title>Expansion and diversification of the MSDIN family of cyclic peptide genes in the poisonous agarics Amanita phalloides and A. bisporigera.</title>
        <authorList>
            <person name="Pulman J.A."/>
            <person name="Childs K.L."/>
            <person name="Sgambelluri R.M."/>
            <person name="Walton J.D."/>
        </authorList>
    </citation>
    <scope>NUCLEOTIDE SEQUENCE [LARGE SCALE GENOMIC DNA]</scope>
    <scope>FUNCTION</scope>
</reference>
<comment type="function">
    <text evidence="4">Cyclic heptapeptide that belongs to the MSDIN-like toxin family responsible for a large number of food poisoning cases and deaths (PubMed:27978833). Cycloaminide E is structurally related to other cycloamanides that are non-toxic to mammals but show immunosuppressive activity (PubMed:27978833).</text>
</comment>
<comment type="PTM">
    <text evidence="1">Processed by the macrocyclase-peptidase enzyme POPB to yield a cyclic decapeptide (By similarity). POPB first removes 10 residues from the N-terminus (By similarity). Conformational trapping of the remaining peptide forces the enzyme to release this intermediate rather than proceed to macrocyclization (By similarity). The enzyme rebinds the remaining peptide in a different conformation and catalyzes macrocyclization of the N-terminal 7 residues (By similarity).</text>
</comment>
<comment type="similarity">
    <text evidence="3">Belongs to the MSDIN fungal toxin family.</text>
</comment>
<proteinExistence type="inferred from homology"/>
<feature type="propeptide" id="PRO_0000443783" evidence="4">
    <location>
        <begin position="1"/>
        <end position="10"/>
    </location>
</feature>
<feature type="peptide" id="PRO_0000443784" description="Cycloamanide E" evidence="4">
    <location>
        <begin position="11"/>
        <end position="17"/>
    </location>
</feature>
<feature type="propeptide" id="PRO_0000443785" evidence="4">
    <location>
        <begin position="18"/>
        <end position="34"/>
    </location>
</feature>
<feature type="cross-link" description="Cyclopeptide (Ser-Pro)" evidence="4">
    <location>
        <begin position="11"/>
        <end position="17"/>
    </location>
</feature>
<keyword id="KW-0800">Toxin</keyword>
<evidence type="ECO:0000250" key="1">
    <source>
        <dbReference type="UniProtKB" id="A0A067SLB9"/>
    </source>
</evidence>
<evidence type="ECO:0000303" key="2">
    <source>
    </source>
</evidence>
<evidence type="ECO:0000305" key="3"/>
<evidence type="ECO:0000305" key="4">
    <source>
    </source>
</evidence>
<protein>
    <recommendedName>
        <fullName evidence="2">Cycloamanide E proprotein</fullName>
    </recommendedName>
    <component>
        <recommendedName>
            <fullName evidence="2">Cycloamanide E</fullName>
        </recommendedName>
    </component>
</protein>
<name>CYAE_AMAPH</name>